<feature type="chain" id="PRO_0000179611" description="ATP-dependent Clp protease proteolytic subunit">
    <location>
        <begin position="1"/>
        <end position="193"/>
    </location>
</feature>
<feature type="active site" description="Nucleophile" evidence="1">
    <location>
        <position position="98"/>
    </location>
</feature>
<feature type="active site" evidence="1">
    <location>
        <position position="123"/>
    </location>
</feature>
<evidence type="ECO:0000255" key="1">
    <source>
        <dbReference type="HAMAP-Rule" id="MF_00444"/>
    </source>
</evidence>
<sequence length="193" mass="21350">MSVIPMVVEQTARGERSYDIYSRLLKERVIFLGGEVEDRMANLIVAQLLFLESEDPEKDINIYINSPGGSVTAGMAIYDTMQFVKPDIRTLCVGQACSMGAFLLAGGTAGKRIALPSARVMIHQPLGGFRGQASDIQIHAQEILKIKQTLNERLAFHTGQTIERIERDTDRDNFMSAEEAKAYGLVDEVLASR</sequence>
<protein>
    <recommendedName>
        <fullName evidence="1">ATP-dependent Clp protease proteolytic subunit</fullName>
        <ecNumber evidence="1">3.4.21.92</ecNumber>
    </recommendedName>
    <alternativeName>
        <fullName evidence="1">Endopeptidase Clp</fullName>
    </alternativeName>
</protein>
<organism>
    <name type="scientific">Pasteurella multocida (strain Pm70)</name>
    <dbReference type="NCBI Taxonomy" id="272843"/>
    <lineage>
        <taxon>Bacteria</taxon>
        <taxon>Pseudomonadati</taxon>
        <taxon>Pseudomonadota</taxon>
        <taxon>Gammaproteobacteria</taxon>
        <taxon>Pasteurellales</taxon>
        <taxon>Pasteurellaceae</taxon>
        <taxon>Pasteurella</taxon>
    </lineage>
</organism>
<accession>Q9CJM2</accession>
<dbReference type="EC" id="3.4.21.92" evidence="1"/>
<dbReference type="EMBL" id="AE004439">
    <property type="protein sequence ID" value="AAK04060.1"/>
    <property type="molecule type" value="Genomic_DNA"/>
</dbReference>
<dbReference type="RefSeq" id="WP_005725064.1">
    <property type="nucleotide sequence ID" value="NC_002663.1"/>
</dbReference>
<dbReference type="SMR" id="Q9CJM2"/>
<dbReference type="STRING" id="272843.PM1976"/>
<dbReference type="MEROPS" id="S14.001"/>
<dbReference type="EnsemblBacteria" id="AAK04060">
    <property type="protein sequence ID" value="AAK04060"/>
    <property type="gene ID" value="PM1976"/>
</dbReference>
<dbReference type="GeneID" id="77207303"/>
<dbReference type="KEGG" id="pmu:PM1976"/>
<dbReference type="HOGENOM" id="CLU_058707_3_2_6"/>
<dbReference type="OrthoDB" id="9802800at2"/>
<dbReference type="Proteomes" id="UP000000809">
    <property type="component" value="Chromosome"/>
</dbReference>
<dbReference type="GO" id="GO:0005737">
    <property type="term" value="C:cytoplasm"/>
    <property type="evidence" value="ECO:0007669"/>
    <property type="project" value="UniProtKB-SubCell"/>
</dbReference>
<dbReference type="GO" id="GO:0009368">
    <property type="term" value="C:endopeptidase Clp complex"/>
    <property type="evidence" value="ECO:0007669"/>
    <property type="project" value="TreeGrafter"/>
</dbReference>
<dbReference type="GO" id="GO:0004176">
    <property type="term" value="F:ATP-dependent peptidase activity"/>
    <property type="evidence" value="ECO:0007669"/>
    <property type="project" value="InterPro"/>
</dbReference>
<dbReference type="GO" id="GO:0051117">
    <property type="term" value="F:ATPase binding"/>
    <property type="evidence" value="ECO:0007669"/>
    <property type="project" value="TreeGrafter"/>
</dbReference>
<dbReference type="GO" id="GO:0004252">
    <property type="term" value="F:serine-type endopeptidase activity"/>
    <property type="evidence" value="ECO:0007669"/>
    <property type="project" value="UniProtKB-UniRule"/>
</dbReference>
<dbReference type="GO" id="GO:0006515">
    <property type="term" value="P:protein quality control for misfolded or incompletely synthesized proteins"/>
    <property type="evidence" value="ECO:0007669"/>
    <property type="project" value="TreeGrafter"/>
</dbReference>
<dbReference type="CDD" id="cd07017">
    <property type="entry name" value="S14_ClpP_2"/>
    <property type="match status" value="1"/>
</dbReference>
<dbReference type="FunFam" id="3.90.226.10:FF:000001">
    <property type="entry name" value="ATP-dependent Clp protease proteolytic subunit"/>
    <property type="match status" value="1"/>
</dbReference>
<dbReference type="Gene3D" id="3.90.226.10">
    <property type="entry name" value="2-enoyl-CoA Hydratase, Chain A, domain 1"/>
    <property type="match status" value="1"/>
</dbReference>
<dbReference type="HAMAP" id="MF_00444">
    <property type="entry name" value="ClpP"/>
    <property type="match status" value="1"/>
</dbReference>
<dbReference type="InterPro" id="IPR001907">
    <property type="entry name" value="ClpP"/>
</dbReference>
<dbReference type="InterPro" id="IPR029045">
    <property type="entry name" value="ClpP/crotonase-like_dom_sf"/>
</dbReference>
<dbReference type="InterPro" id="IPR023562">
    <property type="entry name" value="ClpP/TepA"/>
</dbReference>
<dbReference type="InterPro" id="IPR033135">
    <property type="entry name" value="ClpP_His_AS"/>
</dbReference>
<dbReference type="InterPro" id="IPR018215">
    <property type="entry name" value="ClpP_Ser_AS"/>
</dbReference>
<dbReference type="NCBIfam" id="TIGR00493">
    <property type="entry name" value="clpP"/>
    <property type="match status" value="1"/>
</dbReference>
<dbReference type="NCBIfam" id="NF001368">
    <property type="entry name" value="PRK00277.1"/>
    <property type="match status" value="1"/>
</dbReference>
<dbReference type="NCBIfam" id="NF009205">
    <property type="entry name" value="PRK12553.1"/>
    <property type="match status" value="1"/>
</dbReference>
<dbReference type="PANTHER" id="PTHR10381">
    <property type="entry name" value="ATP-DEPENDENT CLP PROTEASE PROTEOLYTIC SUBUNIT"/>
    <property type="match status" value="1"/>
</dbReference>
<dbReference type="PANTHER" id="PTHR10381:SF70">
    <property type="entry name" value="ATP-DEPENDENT CLP PROTEASE PROTEOLYTIC SUBUNIT"/>
    <property type="match status" value="1"/>
</dbReference>
<dbReference type="Pfam" id="PF00574">
    <property type="entry name" value="CLP_protease"/>
    <property type="match status" value="1"/>
</dbReference>
<dbReference type="PRINTS" id="PR00127">
    <property type="entry name" value="CLPPROTEASEP"/>
</dbReference>
<dbReference type="SUPFAM" id="SSF52096">
    <property type="entry name" value="ClpP/crotonase"/>
    <property type="match status" value="1"/>
</dbReference>
<dbReference type="PROSITE" id="PS00382">
    <property type="entry name" value="CLP_PROTEASE_HIS"/>
    <property type="match status" value="1"/>
</dbReference>
<dbReference type="PROSITE" id="PS00381">
    <property type="entry name" value="CLP_PROTEASE_SER"/>
    <property type="match status" value="1"/>
</dbReference>
<proteinExistence type="inferred from homology"/>
<comment type="function">
    <text evidence="1">Cleaves peptides in various proteins in a process that requires ATP hydrolysis. Has a chymotrypsin-like activity. Plays a major role in the degradation of misfolded proteins.</text>
</comment>
<comment type="catalytic activity">
    <reaction evidence="1">
        <text>Hydrolysis of proteins to small peptides in the presence of ATP and magnesium. alpha-casein is the usual test substrate. In the absence of ATP, only oligopeptides shorter than five residues are hydrolyzed (such as succinyl-Leu-Tyr-|-NHMec, and Leu-Tyr-Leu-|-Tyr-Trp, in which cleavage of the -Tyr-|-Leu- and -Tyr-|-Trp bonds also occurs).</text>
        <dbReference type="EC" id="3.4.21.92"/>
    </reaction>
</comment>
<comment type="subunit">
    <text evidence="1">Fourteen ClpP subunits assemble into 2 heptameric rings which stack back to back to give a disk-like structure with a central cavity, resembling the structure of eukaryotic proteasomes.</text>
</comment>
<comment type="subcellular location">
    <subcellularLocation>
        <location evidence="1">Cytoplasm</location>
    </subcellularLocation>
</comment>
<comment type="similarity">
    <text evidence="1">Belongs to the peptidase S14 family.</text>
</comment>
<reference key="1">
    <citation type="journal article" date="2001" name="Proc. Natl. Acad. Sci. U.S.A.">
        <title>Complete genomic sequence of Pasteurella multocida Pm70.</title>
        <authorList>
            <person name="May B.J."/>
            <person name="Zhang Q."/>
            <person name="Li L.L."/>
            <person name="Paustian M.L."/>
            <person name="Whittam T.S."/>
            <person name="Kapur V."/>
        </authorList>
    </citation>
    <scope>NUCLEOTIDE SEQUENCE [LARGE SCALE GENOMIC DNA]</scope>
    <source>
        <strain>Pm70</strain>
    </source>
</reference>
<keyword id="KW-0963">Cytoplasm</keyword>
<keyword id="KW-0378">Hydrolase</keyword>
<keyword id="KW-0645">Protease</keyword>
<keyword id="KW-1185">Reference proteome</keyword>
<keyword id="KW-0720">Serine protease</keyword>
<gene>
    <name evidence="1" type="primary">clpP</name>
    <name type="ordered locus">PM1976</name>
</gene>
<name>CLPP_PASMU</name>